<name>FUND1_CHICK</name>
<evidence type="ECO:0000250" key="1"/>
<evidence type="ECO:0000255" key="2"/>
<evidence type="ECO:0000305" key="3"/>
<accession>E1BWM5</accession>
<comment type="function">
    <text evidence="1">Acts as an activator of hypoxia-induced mitophagy, an important mechanism for mitochondrial quality control.</text>
</comment>
<comment type="subcellular location">
    <subcellularLocation>
        <location evidence="1">Mitochondrion outer membrane</location>
        <topology evidence="1">Multi-pass membrane protein</topology>
    </subcellularLocation>
</comment>
<comment type="similarity">
    <text evidence="3">Belongs to the FUN14 family.</text>
</comment>
<gene>
    <name type="primary">FUNDC1</name>
</gene>
<proteinExistence type="inferred from homology"/>
<protein>
    <recommendedName>
        <fullName>FUN14 domain-containing protein 1</fullName>
    </recommendedName>
</protein>
<feature type="chain" id="PRO_0000416276" description="FUN14 domain-containing protein 1">
    <location>
        <begin position="1"/>
        <end position="156"/>
    </location>
</feature>
<feature type="transmembrane region" description="Helical" evidence="2">
    <location>
        <begin position="49"/>
        <end position="69"/>
    </location>
</feature>
<feature type="transmembrane region" description="Helical" evidence="2">
    <location>
        <begin position="76"/>
        <end position="96"/>
    </location>
</feature>
<feature type="transmembrane region" description="Helical" evidence="2">
    <location>
        <begin position="135"/>
        <end position="155"/>
    </location>
</feature>
<feature type="short sequence motif" description="YXXL">
    <location>
        <begin position="19"/>
        <end position="22"/>
    </location>
</feature>
<organism>
    <name type="scientific">Gallus gallus</name>
    <name type="common">Chicken</name>
    <dbReference type="NCBI Taxonomy" id="9031"/>
    <lineage>
        <taxon>Eukaryota</taxon>
        <taxon>Metazoa</taxon>
        <taxon>Chordata</taxon>
        <taxon>Craniata</taxon>
        <taxon>Vertebrata</taxon>
        <taxon>Euteleostomi</taxon>
        <taxon>Archelosauria</taxon>
        <taxon>Archosauria</taxon>
        <taxon>Dinosauria</taxon>
        <taxon>Saurischia</taxon>
        <taxon>Theropoda</taxon>
        <taxon>Coelurosauria</taxon>
        <taxon>Aves</taxon>
        <taxon>Neognathae</taxon>
        <taxon>Galloanserae</taxon>
        <taxon>Galliformes</taxon>
        <taxon>Phasianidae</taxon>
        <taxon>Phasianinae</taxon>
        <taxon>Gallus</taxon>
    </lineage>
</organism>
<reference key="1">
    <citation type="journal article" date="2004" name="Nature">
        <title>Sequence and comparative analysis of the chicken genome provide unique perspectives on vertebrate evolution.</title>
        <authorList>
            <person name="Hillier L.W."/>
            <person name="Miller W."/>
            <person name="Birney E."/>
            <person name="Warren W."/>
            <person name="Hardison R.C."/>
            <person name="Ponting C.P."/>
            <person name="Bork P."/>
            <person name="Burt D.W."/>
            <person name="Groenen M.A.M."/>
            <person name="Delany M.E."/>
            <person name="Dodgson J.B."/>
            <person name="Chinwalla A.T."/>
            <person name="Cliften P.F."/>
            <person name="Clifton S.W."/>
            <person name="Delehaunty K.D."/>
            <person name="Fronick C."/>
            <person name="Fulton R.S."/>
            <person name="Graves T.A."/>
            <person name="Kremitzki C."/>
            <person name="Layman D."/>
            <person name="Magrini V."/>
            <person name="McPherson J.D."/>
            <person name="Miner T.L."/>
            <person name="Minx P."/>
            <person name="Nash W.E."/>
            <person name="Nhan M.N."/>
            <person name="Nelson J.O."/>
            <person name="Oddy L.G."/>
            <person name="Pohl C.S."/>
            <person name="Randall-Maher J."/>
            <person name="Smith S.M."/>
            <person name="Wallis J.W."/>
            <person name="Yang S.-P."/>
            <person name="Romanov M.N."/>
            <person name="Rondelli C.M."/>
            <person name="Paton B."/>
            <person name="Smith J."/>
            <person name="Morrice D."/>
            <person name="Daniels L."/>
            <person name="Tempest H.G."/>
            <person name="Robertson L."/>
            <person name="Masabanda J.S."/>
            <person name="Griffin D.K."/>
            <person name="Vignal A."/>
            <person name="Fillon V."/>
            <person name="Jacobbson L."/>
            <person name="Kerje S."/>
            <person name="Andersson L."/>
            <person name="Crooijmans R.P."/>
            <person name="Aerts J."/>
            <person name="van der Poel J.J."/>
            <person name="Ellegren H."/>
            <person name="Caldwell R.B."/>
            <person name="Hubbard S.J."/>
            <person name="Grafham D.V."/>
            <person name="Kierzek A.M."/>
            <person name="McLaren S.R."/>
            <person name="Overton I.M."/>
            <person name="Arakawa H."/>
            <person name="Beattie K.J."/>
            <person name="Bezzubov Y."/>
            <person name="Boardman P.E."/>
            <person name="Bonfield J.K."/>
            <person name="Croning M.D.R."/>
            <person name="Davies R.M."/>
            <person name="Francis M.D."/>
            <person name="Humphray S.J."/>
            <person name="Scott C.E."/>
            <person name="Taylor R.G."/>
            <person name="Tickle C."/>
            <person name="Brown W.R.A."/>
            <person name="Rogers J."/>
            <person name="Buerstedde J.-M."/>
            <person name="Wilson S.A."/>
            <person name="Stubbs L."/>
            <person name="Ovcharenko I."/>
            <person name="Gordon L."/>
            <person name="Lucas S."/>
            <person name="Miller M.M."/>
            <person name="Inoko H."/>
            <person name="Shiina T."/>
            <person name="Kaufman J."/>
            <person name="Salomonsen J."/>
            <person name="Skjoedt K."/>
            <person name="Wong G.K.-S."/>
            <person name="Wang J."/>
            <person name="Liu B."/>
            <person name="Wang J."/>
            <person name="Yu J."/>
            <person name="Yang H."/>
            <person name="Nefedov M."/>
            <person name="Koriabine M."/>
            <person name="Dejong P.J."/>
            <person name="Goodstadt L."/>
            <person name="Webber C."/>
            <person name="Dickens N.J."/>
            <person name="Letunic I."/>
            <person name="Suyama M."/>
            <person name="Torrents D."/>
            <person name="von Mering C."/>
            <person name="Zdobnov E.M."/>
            <person name="Makova K."/>
            <person name="Nekrutenko A."/>
            <person name="Elnitski L."/>
            <person name="Eswara P."/>
            <person name="King D.C."/>
            <person name="Yang S.-P."/>
            <person name="Tyekucheva S."/>
            <person name="Radakrishnan A."/>
            <person name="Harris R.S."/>
            <person name="Chiaromonte F."/>
            <person name="Taylor J."/>
            <person name="He J."/>
            <person name="Rijnkels M."/>
            <person name="Griffiths-Jones S."/>
            <person name="Ureta-Vidal A."/>
            <person name="Hoffman M.M."/>
            <person name="Severin J."/>
            <person name="Searle S.M.J."/>
            <person name="Law A.S."/>
            <person name="Speed D."/>
            <person name="Waddington D."/>
            <person name="Cheng Z."/>
            <person name="Tuzun E."/>
            <person name="Eichler E."/>
            <person name="Bao Z."/>
            <person name="Flicek P."/>
            <person name="Shteynberg D.D."/>
            <person name="Brent M.R."/>
            <person name="Bye J.M."/>
            <person name="Huckle E.J."/>
            <person name="Chatterji S."/>
            <person name="Dewey C."/>
            <person name="Pachter L."/>
            <person name="Kouranov A."/>
            <person name="Mourelatos Z."/>
            <person name="Hatzigeorgiou A.G."/>
            <person name="Paterson A.H."/>
            <person name="Ivarie R."/>
            <person name="Brandstrom M."/>
            <person name="Axelsson E."/>
            <person name="Backstrom N."/>
            <person name="Berlin S."/>
            <person name="Webster M.T."/>
            <person name="Pourquie O."/>
            <person name="Reymond A."/>
            <person name="Ucla C."/>
            <person name="Antonarakis S.E."/>
            <person name="Long M."/>
            <person name="Emerson J.J."/>
            <person name="Betran E."/>
            <person name="Dupanloup I."/>
            <person name="Kaessmann H."/>
            <person name="Hinrichs A.S."/>
            <person name="Bejerano G."/>
            <person name="Furey T.S."/>
            <person name="Harte R.A."/>
            <person name="Raney B."/>
            <person name="Siepel A."/>
            <person name="Kent W.J."/>
            <person name="Haussler D."/>
            <person name="Eyras E."/>
            <person name="Castelo R."/>
            <person name="Abril J.F."/>
            <person name="Castellano S."/>
            <person name="Camara F."/>
            <person name="Parra G."/>
            <person name="Guigo R."/>
            <person name="Bourque G."/>
            <person name="Tesler G."/>
            <person name="Pevzner P.A."/>
            <person name="Smit A."/>
            <person name="Fulton L.A."/>
            <person name="Mardis E.R."/>
            <person name="Wilson R.K."/>
        </authorList>
    </citation>
    <scope>NUCLEOTIDE SEQUENCE [LARGE SCALE GENOMIC DNA]</scope>
    <source>
        <strain>Red jungle fowl</strain>
    </source>
</reference>
<dbReference type="EMBL" id="AADN02010991">
    <property type="status" value="NOT_ANNOTATED_CDS"/>
    <property type="molecule type" value="Genomic_DNA"/>
</dbReference>
<dbReference type="RefSeq" id="NP_001263292.1">
    <property type="nucleotide sequence ID" value="NM_001276363.2"/>
</dbReference>
<dbReference type="FunCoup" id="E1BWM5">
    <property type="interactions" value="85"/>
</dbReference>
<dbReference type="STRING" id="9031.ENSGALP00000043419"/>
<dbReference type="PaxDb" id="9031-ENSGALP00000043419"/>
<dbReference type="GeneID" id="418558"/>
<dbReference type="KEGG" id="gga:418558"/>
<dbReference type="CTD" id="139341"/>
<dbReference type="VEuPathDB" id="HostDB:geneid_418558"/>
<dbReference type="eggNOG" id="KOG4099">
    <property type="taxonomic scope" value="Eukaryota"/>
</dbReference>
<dbReference type="InParanoid" id="E1BWM5"/>
<dbReference type="OMA" id="NAPPQEY"/>
<dbReference type="OrthoDB" id="163794at2759"/>
<dbReference type="PhylomeDB" id="E1BWM5"/>
<dbReference type="TreeFam" id="TF300280"/>
<dbReference type="PRO" id="PR:E1BWM5"/>
<dbReference type="Proteomes" id="UP000000539">
    <property type="component" value="Unassembled WGS sequence"/>
</dbReference>
<dbReference type="GO" id="GO:0005741">
    <property type="term" value="C:mitochondrial outer membrane"/>
    <property type="evidence" value="ECO:0000250"/>
    <property type="project" value="UniProtKB"/>
</dbReference>
<dbReference type="GO" id="GO:0000422">
    <property type="term" value="P:autophagy of mitochondrion"/>
    <property type="evidence" value="ECO:0000250"/>
    <property type="project" value="UniProtKB"/>
</dbReference>
<dbReference type="GO" id="GO:0001666">
    <property type="term" value="P:response to hypoxia"/>
    <property type="evidence" value="ECO:0000250"/>
    <property type="project" value="UniProtKB"/>
</dbReference>
<dbReference type="InterPro" id="IPR007014">
    <property type="entry name" value="FUN14"/>
</dbReference>
<dbReference type="PANTHER" id="PTHR21346">
    <property type="entry name" value="FUN14 DOMAIN CONTAINING"/>
    <property type="match status" value="1"/>
</dbReference>
<dbReference type="PANTHER" id="PTHR21346:SF2">
    <property type="entry name" value="FUN14 DOMAIN-CONTAINING PROTEIN 1"/>
    <property type="match status" value="1"/>
</dbReference>
<dbReference type="Pfam" id="PF04930">
    <property type="entry name" value="FUN14"/>
    <property type="match status" value="1"/>
</dbReference>
<keyword id="KW-0072">Autophagy</keyword>
<keyword id="KW-0472">Membrane</keyword>
<keyword id="KW-0496">Mitochondrion</keyword>
<keyword id="KW-1000">Mitochondrion outer membrane</keyword>
<keyword id="KW-1185">Reference proteome</keyword>
<keyword id="KW-0812">Transmembrane</keyword>
<keyword id="KW-1133">Transmembrane helix</keyword>
<sequence length="156" mass="17279">MAARRPRTAPEHESDDDSYEVLDLTEYARRHHWWNRLFGRNSGPIVEKYSVATQIVMGGVTGWCAGFLFQKVGKLAATAVGGGFLLLQIASHSGYVQVDWKRVEKDVNKAKKQLKKRANKAAPEINTLIEESTEFIKQNIVVSSGFVGGFLLGLAS</sequence>